<accession>Q80YR2</accession>
<accession>Q6PED9</accession>
<accession>Q8C1Y2</accession>
<gene>
    <name evidence="7" type="primary">Fhip2b</name>
    <name evidence="7" type="synonym">Fam160b2</name>
    <name evidence="5" type="synonym">Rai16</name>
</gene>
<name>FHI2B_MOUSE</name>
<evidence type="ECO:0000250" key="1">
    <source>
        <dbReference type="UniProtKB" id="Q86V87"/>
    </source>
</evidence>
<evidence type="ECO:0000256" key="2">
    <source>
        <dbReference type="SAM" id="MobiDB-lite"/>
    </source>
</evidence>
<evidence type="ECO:0000269" key="3">
    <source>
    </source>
</evidence>
<evidence type="ECO:0000303" key="4">
    <source>
    </source>
</evidence>
<evidence type="ECO:0000303" key="5">
    <source>
    </source>
</evidence>
<evidence type="ECO:0000305" key="6"/>
<evidence type="ECO:0000312" key="7">
    <source>
        <dbReference type="MGI" id="MGI:3036290"/>
    </source>
</evidence>
<protein>
    <recommendedName>
        <fullName evidence="7">FHF complex subunit HOOK-interacting protein 2B</fullName>
    </recommendedName>
    <alternativeName>
        <fullName evidence="5">Retinoic acid-induced protein 16</fullName>
    </alternativeName>
</protein>
<proteinExistence type="evidence at protein level"/>
<comment type="function">
    <text evidence="1 3">Able to activate MAPK/ERK and TGFB signaling pathways (By similarity). May regulate the activity of genes involved in intestinal barrier function and immunoprotective inflammation (PubMed:31862898). May play a role in cell proliferation (By similarity).</text>
</comment>
<comment type="alternative products">
    <event type="alternative splicing"/>
    <isoform>
        <id>Q80YR2-1</id>
        <name>1</name>
        <sequence type="displayed"/>
    </isoform>
    <isoform>
        <id>Q80YR2-2</id>
        <name>2</name>
        <sequence type="described" ref="VSP_024588 VSP_024589"/>
    </isoform>
</comment>
<comment type="tissue specificity">
    <text evidence="3">Expressed in colon.</text>
</comment>
<comment type="disruption phenotype">
    <text evidence="3">Mutants are viable, fertile with no apparent defects. Mice are more susceptibility to colitis induced by dextran sodium sulfate (DSS) than wild type littermates (PubMed:31862898). They display significantly increased tumor burden compared with WT mice assessed in colitis-associated colorectal cancer model induced by azoxymethane (AOM)-DSS (PubMed:31862898).</text>
</comment>
<comment type="similarity">
    <text evidence="6">Belongs to the FHIP family.</text>
</comment>
<comment type="sequence caution" evidence="6">
    <conflict type="erroneous initiation">
        <sequence resource="EMBL-CDS" id="AAH50861"/>
    </conflict>
    <text>Extended N-terminus.</text>
</comment>
<comment type="sequence caution" evidence="6">
    <conflict type="frameshift">
        <sequence resource="EMBL-CDS" id="BAC41057"/>
    </conflict>
</comment>
<keyword id="KW-0025">Alternative splicing</keyword>
<keyword id="KW-1185">Reference proteome</keyword>
<feature type="chain" id="PRO_0000284646" description="FHF complex subunit HOOK-interacting protein 2B">
    <location>
        <begin position="1"/>
        <end position="744"/>
    </location>
</feature>
<feature type="region of interest" description="Disordered" evidence="2">
    <location>
        <begin position="184"/>
        <end position="213"/>
    </location>
</feature>
<feature type="region of interest" description="Disordered" evidence="2">
    <location>
        <begin position="510"/>
        <end position="530"/>
    </location>
</feature>
<feature type="compositionally biased region" description="Basic and acidic residues" evidence="2">
    <location>
        <begin position="197"/>
        <end position="213"/>
    </location>
</feature>
<feature type="splice variant" id="VSP_024588" description="In isoform 2." evidence="4">
    <original>SFLCL</original>
    <variation>RWEEG</variation>
    <location>
        <begin position="540"/>
        <end position="544"/>
    </location>
</feature>
<feature type="splice variant" id="VSP_024589" description="In isoform 2." evidence="4">
    <location>
        <begin position="545"/>
        <end position="744"/>
    </location>
</feature>
<feature type="sequence conflict" description="In Ref. 3; BAC41057." evidence="6" ref="3">
    <original>H</original>
    <variation>R</variation>
    <location>
        <position position="423"/>
    </location>
</feature>
<feature type="sequence conflict" description="In Ref. 2; AAH58108." evidence="6" ref="2">
    <original>S</original>
    <variation>R</variation>
    <location>
        <position position="575"/>
    </location>
</feature>
<feature type="sequence conflict" description="In Ref. 3; BAC41057." evidence="6" ref="3">
    <original>E</original>
    <variation>G</variation>
    <location>
        <position position="698"/>
    </location>
</feature>
<feature type="sequence conflict" description="In Ref. 3; BAC41057." evidence="6" ref="3">
    <original>F</original>
    <variation>C</variation>
    <location>
        <position position="736"/>
    </location>
</feature>
<reference key="1">
    <citation type="journal article" date="2009" name="PLoS Biol.">
        <title>Lineage-specific biology revealed by a finished genome assembly of the mouse.</title>
        <authorList>
            <person name="Church D.M."/>
            <person name="Goodstadt L."/>
            <person name="Hillier L.W."/>
            <person name="Zody M.C."/>
            <person name="Goldstein S."/>
            <person name="She X."/>
            <person name="Bult C.J."/>
            <person name="Agarwala R."/>
            <person name="Cherry J.L."/>
            <person name="DiCuccio M."/>
            <person name="Hlavina W."/>
            <person name="Kapustin Y."/>
            <person name="Meric P."/>
            <person name="Maglott D."/>
            <person name="Birtle Z."/>
            <person name="Marques A.C."/>
            <person name="Graves T."/>
            <person name="Zhou S."/>
            <person name="Teague B."/>
            <person name="Potamousis K."/>
            <person name="Churas C."/>
            <person name="Place M."/>
            <person name="Herschleb J."/>
            <person name="Runnheim R."/>
            <person name="Forrest D."/>
            <person name="Amos-Landgraf J."/>
            <person name="Schwartz D.C."/>
            <person name="Cheng Z."/>
            <person name="Lindblad-Toh K."/>
            <person name="Eichler E.E."/>
            <person name="Ponting C.P."/>
        </authorList>
    </citation>
    <scope>NUCLEOTIDE SEQUENCE [LARGE SCALE GENOMIC DNA]</scope>
    <source>
        <strain>C57BL/6J</strain>
    </source>
</reference>
<reference key="2">
    <citation type="journal article" date="2004" name="Genome Res.">
        <title>The status, quality, and expansion of the NIH full-length cDNA project: the Mammalian Gene Collection (MGC).</title>
        <authorList>
            <consortium name="The MGC Project Team"/>
        </authorList>
    </citation>
    <scope>NUCLEOTIDE SEQUENCE [LARGE SCALE MRNA] (ISOFORM 2)</scope>
    <scope>NUCLEOTIDE SEQUENCE [LARGE SCALE MRNA] OF 550-744 (ISOFORM 1)</scope>
    <source>
        <strain>C57BL/6J</strain>
        <tissue>Brain</tissue>
        <tissue>Embryo</tissue>
    </source>
</reference>
<reference key="3">
    <citation type="journal article" date="2005" name="Science">
        <title>The transcriptional landscape of the mammalian genome.</title>
        <authorList>
            <person name="Carninci P."/>
            <person name="Kasukawa T."/>
            <person name="Katayama S."/>
            <person name="Gough J."/>
            <person name="Frith M.C."/>
            <person name="Maeda N."/>
            <person name="Oyama R."/>
            <person name="Ravasi T."/>
            <person name="Lenhard B."/>
            <person name="Wells C."/>
            <person name="Kodzius R."/>
            <person name="Shimokawa K."/>
            <person name="Bajic V.B."/>
            <person name="Brenner S.E."/>
            <person name="Batalov S."/>
            <person name="Forrest A.R."/>
            <person name="Zavolan M."/>
            <person name="Davis M.J."/>
            <person name="Wilming L.G."/>
            <person name="Aidinis V."/>
            <person name="Allen J.E."/>
            <person name="Ambesi-Impiombato A."/>
            <person name="Apweiler R."/>
            <person name="Aturaliya R.N."/>
            <person name="Bailey T.L."/>
            <person name="Bansal M."/>
            <person name="Baxter L."/>
            <person name="Beisel K.W."/>
            <person name="Bersano T."/>
            <person name="Bono H."/>
            <person name="Chalk A.M."/>
            <person name="Chiu K.P."/>
            <person name="Choudhary V."/>
            <person name="Christoffels A."/>
            <person name="Clutterbuck D.R."/>
            <person name="Crowe M.L."/>
            <person name="Dalla E."/>
            <person name="Dalrymple B.P."/>
            <person name="de Bono B."/>
            <person name="Della Gatta G."/>
            <person name="di Bernardo D."/>
            <person name="Down T."/>
            <person name="Engstrom P."/>
            <person name="Fagiolini M."/>
            <person name="Faulkner G."/>
            <person name="Fletcher C.F."/>
            <person name="Fukushima T."/>
            <person name="Furuno M."/>
            <person name="Futaki S."/>
            <person name="Gariboldi M."/>
            <person name="Georgii-Hemming P."/>
            <person name="Gingeras T.R."/>
            <person name="Gojobori T."/>
            <person name="Green R.E."/>
            <person name="Gustincich S."/>
            <person name="Harbers M."/>
            <person name="Hayashi Y."/>
            <person name="Hensch T.K."/>
            <person name="Hirokawa N."/>
            <person name="Hill D."/>
            <person name="Huminiecki L."/>
            <person name="Iacono M."/>
            <person name="Ikeo K."/>
            <person name="Iwama A."/>
            <person name="Ishikawa T."/>
            <person name="Jakt M."/>
            <person name="Kanapin A."/>
            <person name="Katoh M."/>
            <person name="Kawasawa Y."/>
            <person name="Kelso J."/>
            <person name="Kitamura H."/>
            <person name="Kitano H."/>
            <person name="Kollias G."/>
            <person name="Krishnan S.P."/>
            <person name="Kruger A."/>
            <person name="Kummerfeld S.K."/>
            <person name="Kurochkin I.V."/>
            <person name="Lareau L.F."/>
            <person name="Lazarevic D."/>
            <person name="Lipovich L."/>
            <person name="Liu J."/>
            <person name="Liuni S."/>
            <person name="McWilliam S."/>
            <person name="Madan Babu M."/>
            <person name="Madera M."/>
            <person name="Marchionni L."/>
            <person name="Matsuda H."/>
            <person name="Matsuzawa S."/>
            <person name="Miki H."/>
            <person name="Mignone F."/>
            <person name="Miyake S."/>
            <person name="Morris K."/>
            <person name="Mottagui-Tabar S."/>
            <person name="Mulder N."/>
            <person name="Nakano N."/>
            <person name="Nakauchi H."/>
            <person name="Ng P."/>
            <person name="Nilsson R."/>
            <person name="Nishiguchi S."/>
            <person name="Nishikawa S."/>
            <person name="Nori F."/>
            <person name="Ohara O."/>
            <person name="Okazaki Y."/>
            <person name="Orlando V."/>
            <person name="Pang K.C."/>
            <person name="Pavan W.J."/>
            <person name="Pavesi G."/>
            <person name="Pesole G."/>
            <person name="Petrovsky N."/>
            <person name="Piazza S."/>
            <person name="Reed J."/>
            <person name="Reid J.F."/>
            <person name="Ring B.Z."/>
            <person name="Ringwald M."/>
            <person name="Rost B."/>
            <person name="Ruan Y."/>
            <person name="Salzberg S.L."/>
            <person name="Sandelin A."/>
            <person name="Schneider C."/>
            <person name="Schoenbach C."/>
            <person name="Sekiguchi K."/>
            <person name="Semple C.A."/>
            <person name="Seno S."/>
            <person name="Sessa L."/>
            <person name="Sheng Y."/>
            <person name="Shibata Y."/>
            <person name="Shimada H."/>
            <person name="Shimada K."/>
            <person name="Silva D."/>
            <person name="Sinclair B."/>
            <person name="Sperling S."/>
            <person name="Stupka E."/>
            <person name="Sugiura K."/>
            <person name="Sultana R."/>
            <person name="Takenaka Y."/>
            <person name="Taki K."/>
            <person name="Tammoja K."/>
            <person name="Tan S.L."/>
            <person name="Tang S."/>
            <person name="Taylor M.S."/>
            <person name="Tegner J."/>
            <person name="Teichmann S.A."/>
            <person name="Ueda H.R."/>
            <person name="van Nimwegen E."/>
            <person name="Verardo R."/>
            <person name="Wei C.L."/>
            <person name="Yagi K."/>
            <person name="Yamanishi H."/>
            <person name="Zabarovsky E."/>
            <person name="Zhu S."/>
            <person name="Zimmer A."/>
            <person name="Hide W."/>
            <person name="Bult C."/>
            <person name="Grimmond S.M."/>
            <person name="Teasdale R.D."/>
            <person name="Liu E.T."/>
            <person name="Brusic V."/>
            <person name="Quackenbush J."/>
            <person name="Wahlestedt C."/>
            <person name="Mattick J.S."/>
            <person name="Hume D.A."/>
            <person name="Kai C."/>
            <person name="Sasaki D."/>
            <person name="Tomaru Y."/>
            <person name="Fukuda S."/>
            <person name="Kanamori-Katayama M."/>
            <person name="Suzuki M."/>
            <person name="Aoki J."/>
            <person name="Arakawa T."/>
            <person name="Iida J."/>
            <person name="Imamura K."/>
            <person name="Itoh M."/>
            <person name="Kato T."/>
            <person name="Kawaji H."/>
            <person name="Kawagashira N."/>
            <person name="Kawashima T."/>
            <person name="Kojima M."/>
            <person name="Kondo S."/>
            <person name="Konno H."/>
            <person name="Nakano K."/>
            <person name="Ninomiya N."/>
            <person name="Nishio T."/>
            <person name="Okada M."/>
            <person name="Plessy C."/>
            <person name="Shibata K."/>
            <person name="Shiraki T."/>
            <person name="Suzuki S."/>
            <person name="Tagami M."/>
            <person name="Waki K."/>
            <person name="Watahiki A."/>
            <person name="Okamura-Oho Y."/>
            <person name="Suzuki H."/>
            <person name="Kawai J."/>
            <person name="Hayashizaki Y."/>
        </authorList>
    </citation>
    <scope>NUCLEOTIDE SEQUENCE [LARGE SCALE MRNA] OF 235-744 (ISOFORM 1)</scope>
</reference>
<reference key="4">
    <citation type="journal article" date="2010" name="Cell">
        <title>A tissue-specific atlas of mouse protein phosphorylation and expression.</title>
        <authorList>
            <person name="Huttlin E.L."/>
            <person name="Jedrychowski M.P."/>
            <person name="Elias J.E."/>
            <person name="Goswami T."/>
            <person name="Rad R."/>
            <person name="Beausoleil S.A."/>
            <person name="Villen J."/>
            <person name="Haas W."/>
            <person name="Sowa M.E."/>
            <person name="Gygi S.P."/>
        </authorList>
    </citation>
    <scope>IDENTIFICATION BY MASS SPECTROMETRY [LARGE SCALE ANALYSIS]</scope>
    <source>
        <tissue>Brain</tissue>
    </source>
</reference>
<reference key="5">
    <citation type="journal article" date="2019" name="Cell Death Dis.">
        <title>Retinoid acid induced 16 deficiency aggravates colitis and colitis-associated tumorigenesis in mice.</title>
        <authorList>
            <person name="Xu Y.L."/>
            <person name="Ding C.L."/>
            <person name="Qian C.L."/>
            <person name="Qi Z.T."/>
            <person name="Wang W."/>
        </authorList>
    </citation>
    <scope>FUNCTION</scope>
    <scope>DISRUPTION PHENOTYPE</scope>
    <scope>TISSUE SPECIFICITY</scope>
</reference>
<organism>
    <name type="scientific">Mus musculus</name>
    <name type="common">Mouse</name>
    <dbReference type="NCBI Taxonomy" id="10090"/>
    <lineage>
        <taxon>Eukaryota</taxon>
        <taxon>Metazoa</taxon>
        <taxon>Chordata</taxon>
        <taxon>Craniata</taxon>
        <taxon>Vertebrata</taxon>
        <taxon>Euteleostomi</taxon>
        <taxon>Mammalia</taxon>
        <taxon>Eutheria</taxon>
        <taxon>Euarchontoglires</taxon>
        <taxon>Glires</taxon>
        <taxon>Rodentia</taxon>
        <taxon>Myomorpha</taxon>
        <taxon>Muroidea</taxon>
        <taxon>Muridae</taxon>
        <taxon>Murinae</taxon>
        <taxon>Mus</taxon>
        <taxon>Mus</taxon>
    </lineage>
</organism>
<dbReference type="EMBL" id="AC154563">
    <property type="status" value="NOT_ANNOTATED_CDS"/>
    <property type="molecule type" value="Genomic_DNA"/>
</dbReference>
<dbReference type="EMBL" id="BC050861">
    <property type="protein sequence ID" value="AAH50861.1"/>
    <property type="status" value="ALT_INIT"/>
    <property type="molecule type" value="mRNA"/>
</dbReference>
<dbReference type="EMBL" id="BC058108">
    <property type="protein sequence ID" value="AAH58108.1"/>
    <property type="molecule type" value="mRNA"/>
</dbReference>
<dbReference type="EMBL" id="AK090035">
    <property type="protein sequence ID" value="BAC41057.1"/>
    <property type="status" value="ALT_FRAME"/>
    <property type="molecule type" value="mRNA"/>
</dbReference>
<dbReference type="CCDS" id="CCDS49537.1">
    <molecule id="Q80YR2-1"/>
</dbReference>
<dbReference type="RefSeq" id="NP_919326.1">
    <molecule id="Q80YR2-1"/>
    <property type="nucleotide sequence ID" value="NM_194345.1"/>
</dbReference>
<dbReference type="SMR" id="Q80YR2"/>
<dbReference type="BioGRID" id="232057">
    <property type="interactions" value="1"/>
</dbReference>
<dbReference type="FunCoup" id="Q80YR2">
    <property type="interactions" value="30"/>
</dbReference>
<dbReference type="IntAct" id="Q80YR2">
    <property type="interactions" value="1"/>
</dbReference>
<dbReference type="STRING" id="10090.ENSMUSP00000022690"/>
<dbReference type="iPTMnet" id="Q80YR2"/>
<dbReference type="PhosphoSitePlus" id="Q80YR2"/>
<dbReference type="SwissPalm" id="Q80YR2"/>
<dbReference type="PaxDb" id="10090-ENSMUSP00000022690"/>
<dbReference type="PeptideAtlas" id="Q80YR2"/>
<dbReference type="ProteomicsDB" id="275715">
    <molecule id="Q80YR2-1"/>
</dbReference>
<dbReference type="ProteomicsDB" id="275716">
    <molecule id="Q80YR2-2"/>
</dbReference>
<dbReference type="Pumba" id="Q80YR2"/>
<dbReference type="Antibodypedia" id="9275">
    <property type="antibodies" value="103 antibodies from 23 providers"/>
</dbReference>
<dbReference type="Ensembl" id="ENSMUST00000022690.10">
    <molecule id="Q80YR2-1"/>
    <property type="protein sequence ID" value="ENSMUSP00000022690.10"/>
    <property type="gene ID" value="ENSMUSG00000022095.10"/>
</dbReference>
<dbReference type="GeneID" id="239170"/>
<dbReference type="KEGG" id="mmu:239170"/>
<dbReference type="UCSC" id="uc007uol.2">
    <molecule id="Q80YR2-1"/>
    <property type="organism name" value="mouse"/>
</dbReference>
<dbReference type="AGR" id="MGI:3036290"/>
<dbReference type="CTD" id="64760"/>
<dbReference type="MGI" id="MGI:3036290">
    <property type="gene designation" value="Fhip2b"/>
</dbReference>
<dbReference type="VEuPathDB" id="HostDB:ENSMUSG00000022095"/>
<dbReference type="eggNOG" id="KOG3695">
    <property type="taxonomic scope" value="Eukaryota"/>
</dbReference>
<dbReference type="GeneTree" id="ENSGT00950000182936"/>
<dbReference type="HOGENOM" id="CLU_023718_0_0_1"/>
<dbReference type="InParanoid" id="Q80YR2"/>
<dbReference type="OMA" id="CDHLIME"/>
<dbReference type="OrthoDB" id="22035at9989"/>
<dbReference type="PhylomeDB" id="Q80YR2"/>
<dbReference type="TreeFam" id="TF313941"/>
<dbReference type="BioGRID-ORCS" id="239170">
    <property type="hits" value="1 hit in 77 CRISPR screens"/>
</dbReference>
<dbReference type="ChiTaRS" id="Fam160b2">
    <property type="organism name" value="mouse"/>
</dbReference>
<dbReference type="PRO" id="PR:Q80YR2"/>
<dbReference type="Proteomes" id="UP000000589">
    <property type="component" value="Chromosome 14"/>
</dbReference>
<dbReference type="RNAct" id="Q80YR2">
    <property type="molecule type" value="protein"/>
</dbReference>
<dbReference type="Bgee" id="ENSMUSG00000022095">
    <property type="expression patterns" value="Expressed in otolith organ and 221 other cell types or tissues"/>
</dbReference>
<dbReference type="InterPro" id="IPR019384">
    <property type="entry name" value="FHIP"/>
</dbReference>
<dbReference type="InterPro" id="IPR045669">
    <property type="entry name" value="FHIP_C"/>
</dbReference>
<dbReference type="InterPro" id="IPR045668">
    <property type="entry name" value="FHIP_KELAA_motif"/>
</dbReference>
<dbReference type="PANTHER" id="PTHR21705:SF9">
    <property type="entry name" value="FHF COMPLEX SUBUNIT HOOK-INTERACTING PROTEIN 2B"/>
    <property type="match status" value="1"/>
</dbReference>
<dbReference type="PANTHER" id="PTHR21705">
    <property type="entry name" value="RAI16 PROTEIN-RELATED"/>
    <property type="match status" value="1"/>
</dbReference>
<dbReference type="Pfam" id="PF19314">
    <property type="entry name" value="DUF5917"/>
    <property type="match status" value="1"/>
</dbReference>
<dbReference type="Pfam" id="PF19311">
    <property type="entry name" value="KELAA"/>
    <property type="match status" value="1"/>
</dbReference>
<dbReference type="Pfam" id="PF10257">
    <property type="entry name" value="RAI16-like"/>
    <property type="match status" value="1"/>
</dbReference>
<sequence>MLSRLGALLQEAVGAREPSIDLLQAFVEHWKGITHYYIESTDENTPAKKTDIPWRLKQMLDILVYEEKQQASSGEAGPCLEYLLQHKILETLCTLGKAEYPPGMRQQVFQFFSKVLSQVQHPLLHYLSVHRPVQKLLRLGGTVPGSLTEKEEVQFTSVLCSKIQQDPELLAYILEGKKIIGKKKTARESTAPPKDIAGYRDKDCPHSDALNRDPGLDKEHCGVPALSIHLPAETEGPENGPGESNLITSLLGLCKSKKSRLALKAQENILLLVSVASPAAATYLTQSTSCCMAIAEHLCQLYRSMPACLDPADIATLEGISWRLPSAPSDETAFPGKEALAAFLGWFDYCDHLITEAHTVVADALAKAVAEKLFVETLQPQLLHVSEQSILTSTALLTALLRQLRSPALLQEAMTFLLGTDQHPAAIEDSPHTLGTHLIMHCDHLSDEISIATLRLFEELLQKPHEQAIRSLVLQNLEGRLYVARGSPEPESYEDTLDLEEDPYFTDGFLDSGLQPSTKPPPAPATSSDGKTAVTEIVNSFLCLVPEEAKTSAFLEENGYDTYVHDAYGLFQECSSRVAHWGWPLGPAPLDSHEPERPFFEGRFLQVLFDRIARILDQPYSLNLQVTSVLSRLALFPHPHIHEYLLDPYISLAPGCRSLFSVLVRVIGDLMQRIQRVPQFSGKLLLVRKQLMGQVPGEHLDHQTLLQGVVVLEEFCKELAAIAFVKFPPHGPYLNFSPPPEGQV</sequence>